<dbReference type="EMBL" id="CP000253">
    <property type="protein sequence ID" value="ABD30853.1"/>
    <property type="molecule type" value="Genomic_DNA"/>
</dbReference>
<dbReference type="RefSeq" id="WP_001138360.1">
    <property type="nucleotide sequence ID" value="NZ_LS483365.1"/>
</dbReference>
<dbReference type="RefSeq" id="YP_500289.1">
    <property type="nucleotide sequence ID" value="NC_007795.1"/>
</dbReference>
<dbReference type="PDB" id="4WCE">
    <property type="method" value="X-ray"/>
    <property type="resolution" value="3.53 A"/>
    <property type="chains" value="N=1-118"/>
</dbReference>
<dbReference type="PDB" id="4WF9">
    <property type="method" value="X-ray"/>
    <property type="resolution" value="3.43 A"/>
    <property type="chains" value="N=1-118"/>
</dbReference>
<dbReference type="PDB" id="4WFA">
    <property type="method" value="X-ray"/>
    <property type="resolution" value="3.39 A"/>
    <property type="chains" value="N=1-118"/>
</dbReference>
<dbReference type="PDB" id="4WFB">
    <property type="method" value="X-ray"/>
    <property type="resolution" value="3.43 A"/>
    <property type="chains" value="N=1-118"/>
</dbReference>
<dbReference type="PDB" id="5HKV">
    <property type="method" value="X-ray"/>
    <property type="resolution" value="3.66 A"/>
    <property type="chains" value="N=1-118"/>
</dbReference>
<dbReference type="PDB" id="5HL7">
    <property type="method" value="X-ray"/>
    <property type="resolution" value="3.55 A"/>
    <property type="chains" value="N=1-118"/>
</dbReference>
<dbReference type="PDB" id="5LI0">
    <property type="method" value="EM"/>
    <property type="resolution" value="3.80 A"/>
    <property type="chains" value="T=2-117"/>
</dbReference>
<dbReference type="PDB" id="5ND8">
    <property type="method" value="EM"/>
    <property type="resolution" value="3.70 A"/>
    <property type="chains" value="T=1-118"/>
</dbReference>
<dbReference type="PDB" id="5ND9">
    <property type="method" value="EM"/>
    <property type="resolution" value="3.70 A"/>
    <property type="chains" value="T=1-118"/>
</dbReference>
<dbReference type="PDB" id="5NRG">
    <property type="method" value="X-ray"/>
    <property type="resolution" value="3.44 A"/>
    <property type="chains" value="N=1-118"/>
</dbReference>
<dbReference type="PDB" id="5TCU">
    <property type="method" value="EM"/>
    <property type="resolution" value="3.90 A"/>
    <property type="chains" value="L3=2-117"/>
</dbReference>
<dbReference type="PDB" id="6DDD">
    <property type="method" value="EM"/>
    <property type="resolution" value="3.10 A"/>
    <property type="chains" value="C=1-118"/>
</dbReference>
<dbReference type="PDB" id="6DDG">
    <property type="method" value="EM"/>
    <property type="resolution" value="3.10 A"/>
    <property type="chains" value="C=1-118"/>
</dbReference>
<dbReference type="PDB" id="6HMA">
    <property type="method" value="EM"/>
    <property type="resolution" value="2.65 A"/>
    <property type="chains" value="O=2-117"/>
</dbReference>
<dbReference type="PDB" id="6SJ6">
    <property type="method" value="EM"/>
    <property type="resolution" value="3.23 A"/>
    <property type="chains" value="T=1-118"/>
</dbReference>
<dbReference type="PDB" id="6WQN">
    <property type="method" value="EM"/>
    <property type="resolution" value="2.90 A"/>
    <property type="chains" value="C=1-118"/>
</dbReference>
<dbReference type="PDB" id="6WQQ">
    <property type="method" value="EM"/>
    <property type="resolution" value="3.10 A"/>
    <property type="chains" value="C=1-118"/>
</dbReference>
<dbReference type="PDB" id="6WRS">
    <property type="method" value="EM"/>
    <property type="resolution" value="3.20 A"/>
    <property type="chains" value="C=1-118"/>
</dbReference>
<dbReference type="PDB" id="6WRU">
    <property type="method" value="EM"/>
    <property type="resolution" value="3.10 A"/>
    <property type="chains" value="C=1-118"/>
</dbReference>
<dbReference type="PDB" id="6YEF">
    <property type="method" value="EM"/>
    <property type="resolution" value="3.20 A"/>
    <property type="chains" value="T=1-118"/>
</dbReference>
<dbReference type="PDB" id="7ASM">
    <property type="method" value="EM"/>
    <property type="resolution" value="2.48 A"/>
    <property type="chains" value="O=2-117"/>
</dbReference>
<dbReference type="PDB" id="7ASN">
    <property type="method" value="EM"/>
    <property type="resolution" value="2.73 A"/>
    <property type="chains" value="O=2-117"/>
</dbReference>
<dbReference type="PDB" id="7NHL">
    <property type="method" value="EM"/>
    <property type="resolution" value="3.10 A"/>
    <property type="chains" value="T=1-118"/>
</dbReference>
<dbReference type="PDB" id="7NHM">
    <property type="method" value="EM"/>
    <property type="resolution" value="3.10 A"/>
    <property type="chains" value="T=1-118"/>
</dbReference>
<dbReference type="PDB" id="7TTU">
    <property type="method" value="EM"/>
    <property type="resolution" value="3.00 A"/>
    <property type="chains" value="C=1-118"/>
</dbReference>
<dbReference type="PDB" id="7TTW">
    <property type="method" value="EM"/>
    <property type="resolution" value="2.90 A"/>
    <property type="chains" value="C=1-118"/>
</dbReference>
<dbReference type="PDB" id="8P2F">
    <property type="method" value="EM"/>
    <property type="resolution" value="2.44 A"/>
    <property type="chains" value="T=1-118"/>
</dbReference>
<dbReference type="PDB" id="8P2G">
    <property type="method" value="EM"/>
    <property type="resolution" value="2.02 A"/>
    <property type="chains" value="T=1-118"/>
</dbReference>
<dbReference type="PDB" id="8P2H">
    <property type="method" value="EM"/>
    <property type="resolution" value="2.49 A"/>
    <property type="chains" value="T=1-118"/>
</dbReference>
<dbReference type="PDBsum" id="4WCE"/>
<dbReference type="PDBsum" id="4WF9"/>
<dbReference type="PDBsum" id="4WFA"/>
<dbReference type="PDBsum" id="4WFB"/>
<dbReference type="PDBsum" id="5HKV"/>
<dbReference type="PDBsum" id="5HL7"/>
<dbReference type="PDBsum" id="5LI0"/>
<dbReference type="PDBsum" id="5ND8"/>
<dbReference type="PDBsum" id="5ND9"/>
<dbReference type="PDBsum" id="5NRG"/>
<dbReference type="PDBsum" id="5TCU"/>
<dbReference type="PDBsum" id="6DDD"/>
<dbReference type="PDBsum" id="6DDG"/>
<dbReference type="PDBsum" id="6HMA"/>
<dbReference type="PDBsum" id="6SJ6"/>
<dbReference type="PDBsum" id="6WQN"/>
<dbReference type="PDBsum" id="6WQQ"/>
<dbReference type="PDBsum" id="6WRS"/>
<dbReference type="PDBsum" id="6WRU"/>
<dbReference type="PDBsum" id="6YEF"/>
<dbReference type="PDBsum" id="7ASM"/>
<dbReference type="PDBsum" id="7ASN"/>
<dbReference type="PDBsum" id="7NHL"/>
<dbReference type="PDBsum" id="7NHM"/>
<dbReference type="PDBsum" id="7TTU"/>
<dbReference type="PDBsum" id="7TTW"/>
<dbReference type="PDBsum" id="8P2F"/>
<dbReference type="PDBsum" id="8P2G"/>
<dbReference type="PDBsum" id="8P2H"/>
<dbReference type="EMDB" id="EMD-10212"/>
<dbReference type="EMDB" id="EMD-10791"/>
<dbReference type="EMDB" id="EMD-12332"/>
<dbReference type="EMDB" id="EMD-12333"/>
<dbReference type="EMDB" id="EMD-17363"/>
<dbReference type="EMDB" id="EMD-17364"/>
<dbReference type="EMDB" id="EMD-17365"/>
<dbReference type="EMDB" id="EMD-3624"/>
<dbReference type="EMDB" id="EMD-3625"/>
<dbReference type="EMDB" id="EMD-4050"/>
<dbReference type="EMDB" id="EMD-8402"/>
<dbReference type="SMR" id="Q2FXQ1"/>
<dbReference type="IntAct" id="Q2FXQ1">
    <property type="interactions" value="1"/>
</dbReference>
<dbReference type="STRING" id="93061.SAOUHSC_01784"/>
<dbReference type="PaxDb" id="1280-SAXN108_1705"/>
<dbReference type="GeneID" id="3920426"/>
<dbReference type="GeneID" id="98346040"/>
<dbReference type="KEGG" id="sao:SAOUHSC_01784"/>
<dbReference type="PATRIC" id="fig|93061.5.peg.1626"/>
<dbReference type="eggNOG" id="COG0292">
    <property type="taxonomic scope" value="Bacteria"/>
</dbReference>
<dbReference type="HOGENOM" id="CLU_123265_0_1_9"/>
<dbReference type="OrthoDB" id="9808966at2"/>
<dbReference type="EvolutionaryTrace" id="Q2FXQ1"/>
<dbReference type="PRO" id="PR:Q2FXQ1"/>
<dbReference type="Proteomes" id="UP000008816">
    <property type="component" value="Chromosome"/>
</dbReference>
<dbReference type="GO" id="GO:0022625">
    <property type="term" value="C:cytosolic large ribosomal subunit"/>
    <property type="evidence" value="ECO:0000318"/>
    <property type="project" value="GO_Central"/>
</dbReference>
<dbReference type="GO" id="GO:0019843">
    <property type="term" value="F:rRNA binding"/>
    <property type="evidence" value="ECO:0007669"/>
    <property type="project" value="UniProtKB-UniRule"/>
</dbReference>
<dbReference type="GO" id="GO:0003735">
    <property type="term" value="F:structural constituent of ribosome"/>
    <property type="evidence" value="ECO:0000318"/>
    <property type="project" value="GO_Central"/>
</dbReference>
<dbReference type="GO" id="GO:0000027">
    <property type="term" value="P:ribosomal large subunit assembly"/>
    <property type="evidence" value="ECO:0007669"/>
    <property type="project" value="UniProtKB-UniRule"/>
</dbReference>
<dbReference type="GO" id="GO:0006412">
    <property type="term" value="P:translation"/>
    <property type="evidence" value="ECO:0007669"/>
    <property type="project" value="InterPro"/>
</dbReference>
<dbReference type="CDD" id="cd07026">
    <property type="entry name" value="Ribosomal_L20"/>
    <property type="match status" value="1"/>
</dbReference>
<dbReference type="FunFam" id="1.10.1900.20:FF:000001">
    <property type="entry name" value="50S ribosomal protein L20"/>
    <property type="match status" value="1"/>
</dbReference>
<dbReference type="Gene3D" id="6.10.160.10">
    <property type="match status" value="1"/>
</dbReference>
<dbReference type="Gene3D" id="1.10.1900.20">
    <property type="entry name" value="Ribosomal protein L20"/>
    <property type="match status" value="1"/>
</dbReference>
<dbReference type="HAMAP" id="MF_00382">
    <property type="entry name" value="Ribosomal_bL20"/>
    <property type="match status" value="1"/>
</dbReference>
<dbReference type="InterPro" id="IPR005813">
    <property type="entry name" value="Ribosomal_bL20"/>
</dbReference>
<dbReference type="InterPro" id="IPR049946">
    <property type="entry name" value="RIBOSOMAL_L20_CS"/>
</dbReference>
<dbReference type="InterPro" id="IPR035566">
    <property type="entry name" value="Ribosomal_protein_bL20_C"/>
</dbReference>
<dbReference type="NCBIfam" id="TIGR01032">
    <property type="entry name" value="rplT_bact"/>
    <property type="match status" value="1"/>
</dbReference>
<dbReference type="PANTHER" id="PTHR10986">
    <property type="entry name" value="39S RIBOSOMAL PROTEIN L20"/>
    <property type="match status" value="1"/>
</dbReference>
<dbReference type="Pfam" id="PF00453">
    <property type="entry name" value="Ribosomal_L20"/>
    <property type="match status" value="1"/>
</dbReference>
<dbReference type="PRINTS" id="PR00062">
    <property type="entry name" value="RIBOSOMALL20"/>
</dbReference>
<dbReference type="SUPFAM" id="SSF74731">
    <property type="entry name" value="Ribosomal protein L20"/>
    <property type="match status" value="1"/>
</dbReference>
<dbReference type="PROSITE" id="PS00937">
    <property type="entry name" value="RIBOSOMAL_L20"/>
    <property type="match status" value="1"/>
</dbReference>
<comment type="function">
    <text evidence="1">Binds directly to 23S ribosomal RNA and is necessary for the in vitro assembly process of the 50S ribosomal subunit. It is not involved in the protein synthesizing functions of that subunit.</text>
</comment>
<comment type="similarity">
    <text evidence="1">Belongs to the bacterial ribosomal protein bL20 family.</text>
</comment>
<protein>
    <recommendedName>
        <fullName evidence="1">Large ribosomal subunit protein bL20</fullName>
    </recommendedName>
    <alternativeName>
        <fullName evidence="2">50S ribosomal protein L20</fullName>
    </alternativeName>
</protein>
<reference key="1">
    <citation type="book" date="2006" name="Gram positive pathogens, 2nd edition">
        <title>The Staphylococcus aureus NCTC 8325 genome.</title>
        <editorList>
            <person name="Fischetti V."/>
            <person name="Novick R."/>
            <person name="Ferretti J."/>
            <person name="Portnoy D."/>
            <person name="Rood J."/>
        </editorList>
        <authorList>
            <person name="Gillaspy A.F."/>
            <person name="Worrell V."/>
            <person name="Orvis J."/>
            <person name="Roe B.A."/>
            <person name="Dyer D.W."/>
            <person name="Iandolo J.J."/>
        </authorList>
    </citation>
    <scope>NUCLEOTIDE SEQUENCE [LARGE SCALE GENOMIC DNA]</scope>
    <source>
        <strain>NCTC 8325 / PS 47</strain>
    </source>
</reference>
<sequence>MPRVKGGTVTRARRKKTIKLAKGYFGSKHTLYKVAKQQVMKSGQYAFRDRRQRKRDFRKLWITRINAAARQHEMSYSRLMNGLKKAGIDINRKMLSEIAISDEKAFAQLVTKAKDALK</sequence>
<organism>
    <name type="scientific">Staphylococcus aureus (strain NCTC 8325 / PS 47)</name>
    <dbReference type="NCBI Taxonomy" id="93061"/>
    <lineage>
        <taxon>Bacteria</taxon>
        <taxon>Bacillati</taxon>
        <taxon>Bacillota</taxon>
        <taxon>Bacilli</taxon>
        <taxon>Bacillales</taxon>
        <taxon>Staphylococcaceae</taxon>
        <taxon>Staphylococcus</taxon>
    </lineage>
</organism>
<accession>Q2FXQ1</accession>
<name>RL20_STAA8</name>
<proteinExistence type="evidence at protein level"/>
<gene>
    <name evidence="1" type="primary">rplT</name>
    <name type="ordered locus">SAOUHSC_01784</name>
</gene>
<evidence type="ECO:0000255" key="1">
    <source>
        <dbReference type="HAMAP-Rule" id="MF_00382"/>
    </source>
</evidence>
<evidence type="ECO:0000305" key="2"/>
<evidence type="ECO:0007829" key="3">
    <source>
        <dbReference type="PDB" id="7ASM"/>
    </source>
</evidence>
<keyword id="KW-0002">3D-structure</keyword>
<keyword id="KW-1185">Reference proteome</keyword>
<keyword id="KW-0687">Ribonucleoprotein</keyword>
<keyword id="KW-0689">Ribosomal protein</keyword>
<keyword id="KW-0694">RNA-binding</keyword>
<keyword id="KW-0699">rRNA-binding</keyword>
<feature type="chain" id="PRO_1000049081" description="Large ribosomal subunit protein bL20">
    <location>
        <begin position="1"/>
        <end position="118"/>
    </location>
</feature>
<feature type="helix" evidence="3">
    <location>
        <begin position="9"/>
        <end position="19"/>
    </location>
</feature>
<feature type="turn" evidence="3">
    <location>
        <begin position="20"/>
        <end position="23"/>
    </location>
</feature>
<feature type="helix" evidence="3">
    <location>
        <begin position="26"/>
        <end position="29"/>
    </location>
</feature>
<feature type="helix" evidence="3">
    <location>
        <begin position="32"/>
        <end position="70"/>
    </location>
</feature>
<feature type="turn" evidence="3">
    <location>
        <begin position="71"/>
        <end position="73"/>
    </location>
</feature>
<feature type="helix" evidence="3">
    <location>
        <begin position="76"/>
        <end position="86"/>
    </location>
</feature>
<feature type="helix" evidence="3">
    <location>
        <begin position="92"/>
        <end position="101"/>
    </location>
</feature>
<feature type="helix" evidence="3">
    <location>
        <begin position="103"/>
        <end position="115"/>
    </location>
</feature>